<accession>P0C908</accession>
<accession>B8XH28</accession>
<reference key="1">
    <citation type="journal article" date="2007" name="FEBS Lett.">
        <title>Isolation of the first toxin from the scorpion Buthus occitanus israelis showing preference for Shaker potassium channels.</title>
        <authorList>
            <person name="Kozminsky-Atias A."/>
            <person name="Somech E."/>
            <person name="Zilberberg N."/>
        </authorList>
    </citation>
    <scope>NUCLEOTIDE SEQUENCE [MRNA]</scope>
    <scope>PROTEIN SEQUENCE OF 23-59</scope>
    <scope>FUNCTION</scope>
    <scope>MASS SPECTROMETRY</scope>
    <scope>SUBCELLULAR LOCATION</scope>
    <source>
        <tissue>Venom</tissue>
        <tissue>Venom gland</tissue>
    </source>
</reference>
<reference key="2">
    <citation type="journal article" date="2018" name="Nat. Struct. Mol. Biol.">
        <title>Screening, large-scale production and structure-based classification of cystine-dense peptides.</title>
        <authorList>
            <person name="Correnti C.E."/>
            <person name="Gewe M.M."/>
            <person name="Mehlin C."/>
            <person name="Bandaranayake A.D."/>
            <person name="Johnsen W.A."/>
            <person name="Rupert P.B."/>
            <person name="Brusniak M.Y."/>
            <person name="Clarke M."/>
            <person name="Burke S.E."/>
            <person name="De Van Der Schueren W."/>
            <person name="Pilat K."/>
            <person name="Turnbaugh S.M."/>
            <person name="May D."/>
            <person name="Watson A."/>
            <person name="Chan M.K."/>
            <person name="Bahl C.D."/>
            <person name="Olson J.M."/>
            <person name="Strong R.K."/>
        </authorList>
    </citation>
    <scope>FUNCTION</scope>
    <scope>SYNTHESIS OF 23-59</scope>
</reference>
<evidence type="ECO:0000269" key="1">
    <source>
    </source>
</evidence>
<evidence type="ECO:0000269" key="2">
    <source>
    </source>
</evidence>
<evidence type="ECO:0000303" key="3">
    <source>
    </source>
</evidence>
<evidence type="ECO:0000305" key="4"/>
<evidence type="ECO:0000305" key="5">
    <source>
    </source>
</evidence>
<evidence type="ECO:0007744" key="6">
    <source>
        <dbReference type="PDB" id="6ATM"/>
    </source>
</evidence>
<evidence type="ECO:0007829" key="7">
    <source>
        <dbReference type="PDB" id="6ATM"/>
    </source>
</evidence>
<organism>
    <name type="scientific">Buthus israelis</name>
    <name type="common">Israeli scorpion</name>
    <name type="synonym">Buthus occitanus israelis</name>
    <dbReference type="NCBI Taxonomy" id="2899555"/>
    <lineage>
        <taxon>Eukaryota</taxon>
        <taxon>Metazoa</taxon>
        <taxon>Ecdysozoa</taxon>
        <taxon>Arthropoda</taxon>
        <taxon>Chelicerata</taxon>
        <taxon>Arachnida</taxon>
        <taxon>Scorpiones</taxon>
        <taxon>Buthida</taxon>
        <taxon>Buthoidea</taxon>
        <taxon>Buthidae</taxon>
        <taxon>Buthus</taxon>
    </lineage>
</organism>
<keyword id="KW-0002">3D-structure</keyword>
<keyword id="KW-0903">Direct protein sequencing</keyword>
<keyword id="KW-1015">Disulfide bond</keyword>
<keyword id="KW-0872">Ion channel impairing toxin</keyword>
<keyword id="KW-0528">Neurotoxin</keyword>
<keyword id="KW-0632">Potassium channel impairing toxin</keyword>
<keyword id="KW-0964">Secreted</keyword>
<keyword id="KW-0732">Signal</keyword>
<keyword id="KW-0800">Toxin</keyword>
<keyword id="KW-1220">Voltage-gated potassium channel impairing toxin</keyword>
<proteinExistence type="evidence at protein level"/>
<name>KAX3A_BUTIS</name>
<sequence>MKVFFAVLIALFVCSMVIGIHGGVPINVKCRGSRDCLDPCKKAGMRFGKCINSKCHCTP</sequence>
<feature type="signal peptide" evidence="1">
    <location>
        <begin position="1"/>
        <end position="22"/>
    </location>
</feature>
<feature type="peptide" id="PRO_0000368016" description="Potassium channel toxin alpha-KTx 3.10" evidence="1">
    <location>
        <begin position="23"/>
        <end position="59"/>
    </location>
</feature>
<feature type="disulfide bond" evidence="6">
    <location>
        <begin position="30"/>
        <end position="50"/>
    </location>
</feature>
<feature type="disulfide bond" evidence="6">
    <location>
        <begin position="36"/>
        <end position="55"/>
    </location>
</feature>
<feature type="disulfide bond" evidence="6">
    <location>
        <begin position="40"/>
        <end position="57"/>
    </location>
</feature>
<feature type="strand" evidence="7">
    <location>
        <begin position="24"/>
        <end position="29"/>
    </location>
</feature>
<feature type="helix" evidence="7">
    <location>
        <begin position="33"/>
        <end position="36"/>
    </location>
</feature>
<feature type="helix" evidence="7">
    <location>
        <begin position="37"/>
        <end position="42"/>
    </location>
</feature>
<feature type="strand" evidence="7">
    <location>
        <begin position="45"/>
        <end position="51"/>
    </location>
</feature>
<feature type="strand" evidence="7">
    <location>
        <begin position="54"/>
        <end position="58"/>
    </location>
</feature>
<comment type="function">
    <text evidence="1 2">Inhibits insect potassium channel. Is at least a 100-fold more potent against the Drosophila Shaker channel than towards its mammalian homologs Kv1.1/KCNA1 and Kv1.3/KCNA3.</text>
</comment>
<comment type="subcellular location">
    <subcellularLocation>
        <location evidence="1">Secreted</location>
    </subcellularLocation>
</comment>
<comment type="tissue specificity">
    <text evidence="5">Expressed by the venom gland.</text>
</comment>
<comment type="domain">
    <text evidence="4">Has the structural arrangement of an alpha-helix connected to antiparallel beta-sheets by disulfide bonds (CS-alpha/beta).</text>
</comment>
<comment type="mass spectrometry"/>
<comment type="miscellaneous">
    <text evidence="1 2">Negative results: does not affect mammalian potassium channels (Kv2.1/KCNB1, Kir1.1/KCNJ1, Kv3.4/KCNC4, Kv4.2/KCND2, Kv7.1/KCNQ1, Kv7.2/KCNQ2, Kv7.3/KCNQ3 and Kv11.1/KCNH2) (PubMed:17490656). Also weakly inhibits Kv11.1/KCNH2/ERG1, Kv1.2/KCNA2 and Nav1.7/SCN9A channels (PubMed:29483648).</text>
</comment>
<comment type="similarity">
    <text evidence="4">Belongs to the short scorpion toxin superfamily. Potassium channel inhibitor family. Alpha-KTx 03 subfamily.</text>
</comment>
<dbReference type="EMBL" id="FJ360817">
    <property type="protein sequence ID" value="ACJ23137.1"/>
    <property type="molecule type" value="mRNA"/>
</dbReference>
<dbReference type="PDB" id="6ATM">
    <property type="method" value="X-ray"/>
    <property type="resolution" value="2.09 A"/>
    <property type="chains" value="C=23-59"/>
</dbReference>
<dbReference type="PDBsum" id="6ATM"/>
<dbReference type="SMR" id="P0C908"/>
<dbReference type="GO" id="GO:0005576">
    <property type="term" value="C:extracellular region"/>
    <property type="evidence" value="ECO:0007669"/>
    <property type="project" value="UniProtKB-SubCell"/>
</dbReference>
<dbReference type="GO" id="GO:0008200">
    <property type="term" value="F:ion channel inhibitor activity"/>
    <property type="evidence" value="ECO:0007669"/>
    <property type="project" value="InterPro"/>
</dbReference>
<dbReference type="GO" id="GO:0015459">
    <property type="term" value="F:potassium channel regulator activity"/>
    <property type="evidence" value="ECO:0007669"/>
    <property type="project" value="UniProtKB-KW"/>
</dbReference>
<dbReference type="GO" id="GO:0090729">
    <property type="term" value="F:toxin activity"/>
    <property type="evidence" value="ECO:0007669"/>
    <property type="project" value="UniProtKB-KW"/>
</dbReference>
<dbReference type="FunFam" id="3.30.30.10:FF:000009">
    <property type="entry name" value="Potassium channel toxin alpha-KTx 4.3"/>
    <property type="match status" value="1"/>
</dbReference>
<dbReference type="Gene3D" id="3.30.30.10">
    <property type="entry name" value="Knottin, scorpion toxin-like"/>
    <property type="match status" value="1"/>
</dbReference>
<dbReference type="InterPro" id="IPR036574">
    <property type="entry name" value="Scorpion_toxin-like_sf"/>
</dbReference>
<dbReference type="InterPro" id="IPR001947">
    <property type="entry name" value="Scorpion_toxinS_K_inh"/>
</dbReference>
<dbReference type="Pfam" id="PF00451">
    <property type="entry name" value="Toxin_2"/>
    <property type="match status" value="1"/>
</dbReference>
<dbReference type="PRINTS" id="PR00286">
    <property type="entry name" value="CHARYBDTOXIN"/>
</dbReference>
<dbReference type="SUPFAM" id="SSF57095">
    <property type="entry name" value="Scorpion toxin-like"/>
    <property type="match status" value="1"/>
</dbReference>
<dbReference type="PROSITE" id="PS01138">
    <property type="entry name" value="SCORP_SHORT_TOXIN"/>
    <property type="match status" value="1"/>
</dbReference>
<protein>
    <recommendedName>
        <fullName evidence="3">Potassium channel toxin alpha-KTx 3.10</fullName>
    </recommendedName>
    <alternativeName>
        <fullName evidence="3">BoiTx1</fullName>
    </alternativeName>
</protein>